<accession>C4Z9Z8</accession>
<sequence length="95" mass="10465">MLNMNLQFFAHKKGVGSTKNGRDSESKRLGAKRADGQFVKAGNILYRQRGTKIHPGTNVGIGGDDTLYAKVDGVLRFERVGRDKKQASVYPVVNE</sequence>
<reference key="1">
    <citation type="journal article" date="2009" name="Proc. Natl. Acad. Sci. U.S.A.">
        <title>Characterizing a model human gut microbiota composed of members of its two dominant bacterial phyla.</title>
        <authorList>
            <person name="Mahowald M.A."/>
            <person name="Rey F.E."/>
            <person name="Seedorf H."/>
            <person name="Turnbaugh P.J."/>
            <person name="Fulton R.S."/>
            <person name="Wollam A."/>
            <person name="Shah N."/>
            <person name="Wang C."/>
            <person name="Magrini V."/>
            <person name="Wilson R.K."/>
            <person name="Cantarel B.L."/>
            <person name="Coutinho P.M."/>
            <person name="Henrissat B."/>
            <person name="Crock L.W."/>
            <person name="Russell A."/>
            <person name="Verberkmoes N.C."/>
            <person name="Hettich R.L."/>
            <person name="Gordon J.I."/>
        </authorList>
    </citation>
    <scope>NUCLEOTIDE SEQUENCE [LARGE SCALE GENOMIC DNA]</scope>
    <source>
        <strain>ATCC 33656 / DSM 3377 / JCM 17463 / KCTC 5835 / LMG 30912 / VPI 0990</strain>
    </source>
</reference>
<name>RL27_AGARV</name>
<keyword id="KW-0687">Ribonucleoprotein</keyword>
<keyword id="KW-0689">Ribosomal protein</keyword>
<comment type="PTM">
    <text evidence="1">The N-terminus is cleaved by ribosomal processing cysteine protease Prp.</text>
</comment>
<comment type="similarity">
    <text evidence="2">Belongs to the bacterial ribosomal protein bL27 family.</text>
</comment>
<evidence type="ECO:0000250" key="1">
    <source>
        <dbReference type="UniProtKB" id="Q2FXT0"/>
    </source>
</evidence>
<evidence type="ECO:0000255" key="2">
    <source>
        <dbReference type="HAMAP-Rule" id="MF_00539"/>
    </source>
</evidence>
<evidence type="ECO:0000305" key="3"/>
<gene>
    <name evidence="2" type="primary">rpmA</name>
    <name type="ordered locus">EUBREC_1695</name>
</gene>
<organism>
    <name type="scientific">Agathobacter rectalis (strain ATCC 33656 / DSM 3377 / JCM 17463 / KCTC 5835 / VPI 0990)</name>
    <name type="common">Eubacterium rectale</name>
    <dbReference type="NCBI Taxonomy" id="515619"/>
    <lineage>
        <taxon>Bacteria</taxon>
        <taxon>Bacillati</taxon>
        <taxon>Bacillota</taxon>
        <taxon>Clostridia</taxon>
        <taxon>Lachnospirales</taxon>
        <taxon>Lachnospiraceae</taxon>
        <taxon>Agathobacter</taxon>
    </lineage>
</organism>
<dbReference type="EMBL" id="CP001107">
    <property type="protein sequence ID" value="ACR75439.1"/>
    <property type="molecule type" value="Genomic_DNA"/>
</dbReference>
<dbReference type="RefSeq" id="WP_012742537.1">
    <property type="nucleotide sequence ID" value="NZ_CAXSYD010000009.1"/>
</dbReference>
<dbReference type="SMR" id="C4Z9Z8"/>
<dbReference type="STRING" id="515619.EUBREC_1695"/>
<dbReference type="PaxDb" id="515619-EUBREC_1695"/>
<dbReference type="GeneID" id="86988498"/>
<dbReference type="KEGG" id="ere:EUBREC_1695"/>
<dbReference type="HOGENOM" id="CLU_095424_4_0_9"/>
<dbReference type="Proteomes" id="UP000001477">
    <property type="component" value="Chromosome"/>
</dbReference>
<dbReference type="GO" id="GO:0022625">
    <property type="term" value="C:cytosolic large ribosomal subunit"/>
    <property type="evidence" value="ECO:0007669"/>
    <property type="project" value="TreeGrafter"/>
</dbReference>
<dbReference type="GO" id="GO:0003735">
    <property type="term" value="F:structural constituent of ribosome"/>
    <property type="evidence" value="ECO:0007669"/>
    <property type="project" value="InterPro"/>
</dbReference>
<dbReference type="GO" id="GO:0006412">
    <property type="term" value="P:translation"/>
    <property type="evidence" value="ECO:0007669"/>
    <property type="project" value="UniProtKB-UniRule"/>
</dbReference>
<dbReference type="FunFam" id="2.40.50.100:FF:000004">
    <property type="entry name" value="50S ribosomal protein L27"/>
    <property type="match status" value="1"/>
</dbReference>
<dbReference type="Gene3D" id="2.40.50.100">
    <property type="match status" value="1"/>
</dbReference>
<dbReference type="HAMAP" id="MF_00539">
    <property type="entry name" value="Ribosomal_bL27"/>
    <property type="match status" value="1"/>
</dbReference>
<dbReference type="InterPro" id="IPR001684">
    <property type="entry name" value="Ribosomal_bL27"/>
</dbReference>
<dbReference type="InterPro" id="IPR018261">
    <property type="entry name" value="Ribosomal_bL27_CS"/>
</dbReference>
<dbReference type="NCBIfam" id="TIGR00062">
    <property type="entry name" value="L27"/>
    <property type="match status" value="1"/>
</dbReference>
<dbReference type="PANTHER" id="PTHR15893:SF0">
    <property type="entry name" value="LARGE RIBOSOMAL SUBUNIT PROTEIN BL27M"/>
    <property type="match status" value="1"/>
</dbReference>
<dbReference type="PANTHER" id="PTHR15893">
    <property type="entry name" value="RIBOSOMAL PROTEIN L27"/>
    <property type="match status" value="1"/>
</dbReference>
<dbReference type="Pfam" id="PF01016">
    <property type="entry name" value="Ribosomal_L27"/>
    <property type="match status" value="1"/>
</dbReference>
<dbReference type="PRINTS" id="PR00063">
    <property type="entry name" value="RIBOSOMALL27"/>
</dbReference>
<dbReference type="SUPFAM" id="SSF110324">
    <property type="entry name" value="Ribosomal L27 protein-like"/>
    <property type="match status" value="1"/>
</dbReference>
<dbReference type="PROSITE" id="PS00831">
    <property type="entry name" value="RIBOSOMAL_L27"/>
    <property type="match status" value="1"/>
</dbReference>
<proteinExistence type="inferred from homology"/>
<protein>
    <recommendedName>
        <fullName evidence="2">Large ribosomal subunit protein bL27</fullName>
    </recommendedName>
    <alternativeName>
        <fullName evidence="3">50S ribosomal protein L27</fullName>
    </alternativeName>
</protein>
<feature type="propeptide" id="PRO_0000459893" evidence="1">
    <location>
        <begin position="1"/>
        <end position="9"/>
    </location>
</feature>
<feature type="chain" id="PRO_1000211927" description="Large ribosomal subunit protein bL27">
    <location>
        <begin position="10"/>
        <end position="95"/>
    </location>
</feature>